<accession>Q3KI22</accession>
<comment type="function">
    <text evidence="1">Nucleoside triphosphate pyrophosphatase that hydrolyzes dTTP and UTP. May have a dual role in cell division arrest and in preventing the incorporation of modified nucleotides into cellular nucleic acids.</text>
</comment>
<comment type="catalytic activity">
    <reaction evidence="1">
        <text>dTTP + H2O = dTMP + diphosphate + H(+)</text>
        <dbReference type="Rhea" id="RHEA:28534"/>
        <dbReference type="ChEBI" id="CHEBI:15377"/>
        <dbReference type="ChEBI" id="CHEBI:15378"/>
        <dbReference type="ChEBI" id="CHEBI:33019"/>
        <dbReference type="ChEBI" id="CHEBI:37568"/>
        <dbReference type="ChEBI" id="CHEBI:63528"/>
        <dbReference type="EC" id="3.6.1.9"/>
    </reaction>
</comment>
<comment type="catalytic activity">
    <reaction evidence="1">
        <text>UTP + H2O = UMP + diphosphate + H(+)</text>
        <dbReference type="Rhea" id="RHEA:29395"/>
        <dbReference type="ChEBI" id="CHEBI:15377"/>
        <dbReference type="ChEBI" id="CHEBI:15378"/>
        <dbReference type="ChEBI" id="CHEBI:33019"/>
        <dbReference type="ChEBI" id="CHEBI:46398"/>
        <dbReference type="ChEBI" id="CHEBI:57865"/>
        <dbReference type="EC" id="3.6.1.9"/>
    </reaction>
</comment>
<comment type="cofactor">
    <cofactor evidence="1">
        <name>a divalent metal cation</name>
        <dbReference type="ChEBI" id="CHEBI:60240"/>
    </cofactor>
</comment>
<comment type="subcellular location">
    <subcellularLocation>
        <location evidence="1">Cytoplasm</location>
    </subcellularLocation>
</comment>
<comment type="similarity">
    <text evidence="1">Belongs to the Maf family. YhdE subfamily.</text>
</comment>
<dbReference type="EC" id="3.6.1.9" evidence="1"/>
<dbReference type="EMBL" id="CP000094">
    <property type="protein sequence ID" value="ABA72584.1"/>
    <property type="molecule type" value="Genomic_DNA"/>
</dbReference>
<dbReference type="RefSeq" id="WP_011332458.1">
    <property type="nucleotide sequence ID" value="NC_007492.2"/>
</dbReference>
<dbReference type="SMR" id="Q3KI22"/>
<dbReference type="KEGG" id="pfo:Pfl01_0841"/>
<dbReference type="eggNOG" id="COG0424">
    <property type="taxonomic scope" value="Bacteria"/>
</dbReference>
<dbReference type="HOGENOM" id="CLU_040416_2_1_6"/>
<dbReference type="Proteomes" id="UP000002704">
    <property type="component" value="Chromosome"/>
</dbReference>
<dbReference type="GO" id="GO:0005737">
    <property type="term" value="C:cytoplasm"/>
    <property type="evidence" value="ECO:0007669"/>
    <property type="project" value="UniProtKB-SubCell"/>
</dbReference>
<dbReference type="GO" id="GO:0036218">
    <property type="term" value="F:dTTP diphosphatase activity"/>
    <property type="evidence" value="ECO:0007669"/>
    <property type="project" value="RHEA"/>
</dbReference>
<dbReference type="GO" id="GO:0036221">
    <property type="term" value="F:UTP diphosphatase activity"/>
    <property type="evidence" value="ECO:0007669"/>
    <property type="project" value="RHEA"/>
</dbReference>
<dbReference type="GO" id="GO:0009117">
    <property type="term" value="P:nucleotide metabolic process"/>
    <property type="evidence" value="ECO:0007669"/>
    <property type="project" value="UniProtKB-KW"/>
</dbReference>
<dbReference type="CDD" id="cd00555">
    <property type="entry name" value="Maf"/>
    <property type="match status" value="1"/>
</dbReference>
<dbReference type="Gene3D" id="3.90.950.10">
    <property type="match status" value="1"/>
</dbReference>
<dbReference type="HAMAP" id="MF_00528">
    <property type="entry name" value="Maf"/>
    <property type="match status" value="1"/>
</dbReference>
<dbReference type="InterPro" id="IPR029001">
    <property type="entry name" value="ITPase-like_fam"/>
</dbReference>
<dbReference type="InterPro" id="IPR003697">
    <property type="entry name" value="Maf-like"/>
</dbReference>
<dbReference type="NCBIfam" id="TIGR00172">
    <property type="entry name" value="maf"/>
    <property type="match status" value="1"/>
</dbReference>
<dbReference type="PANTHER" id="PTHR43213">
    <property type="entry name" value="BIFUNCTIONAL DTTP/UTP PYROPHOSPHATASE/METHYLTRANSFERASE PROTEIN-RELATED"/>
    <property type="match status" value="1"/>
</dbReference>
<dbReference type="PANTHER" id="PTHR43213:SF5">
    <property type="entry name" value="BIFUNCTIONAL DTTP_UTP PYROPHOSPHATASE_METHYLTRANSFERASE PROTEIN-RELATED"/>
    <property type="match status" value="1"/>
</dbReference>
<dbReference type="Pfam" id="PF02545">
    <property type="entry name" value="Maf"/>
    <property type="match status" value="1"/>
</dbReference>
<dbReference type="PIRSF" id="PIRSF006305">
    <property type="entry name" value="Maf"/>
    <property type="match status" value="1"/>
</dbReference>
<dbReference type="SUPFAM" id="SSF52972">
    <property type="entry name" value="ITPase-like"/>
    <property type="match status" value="1"/>
</dbReference>
<name>NTPPA_PSEPF</name>
<protein>
    <recommendedName>
        <fullName evidence="1">dTTP/UTP pyrophosphatase</fullName>
        <shortName evidence="1">dTTPase/UTPase</shortName>
        <ecNumber evidence="1">3.6.1.9</ecNumber>
    </recommendedName>
    <alternativeName>
        <fullName evidence="1">Nucleoside triphosphate pyrophosphatase</fullName>
    </alternativeName>
    <alternativeName>
        <fullName evidence="1">Nucleotide pyrophosphatase</fullName>
        <shortName evidence="1">Nucleotide PPase</shortName>
    </alternativeName>
</protein>
<keyword id="KW-0963">Cytoplasm</keyword>
<keyword id="KW-0378">Hydrolase</keyword>
<keyword id="KW-0546">Nucleotide metabolism</keyword>
<organism>
    <name type="scientific">Pseudomonas fluorescens (strain Pf0-1)</name>
    <dbReference type="NCBI Taxonomy" id="205922"/>
    <lineage>
        <taxon>Bacteria</taxon>
        <taxon>Pseudomonadati</taxon>
        <taxon>Pseudomonadota</taxon>
        <taxon>Gammaproteobacteria</taxon>
        <taxon>Pseudomonadales</taxon>
        <taxon>Pseudomonadaceae</taxon>
        <taxon>Pseudomonas</taxon>
    </lineage>
</organism>
<proteinExistence type="inferred from homology"/>
<feature type="chain" id="PRO_0000267380" description="dTTP/UTP pyrophosphatase">
    <location>
        <begin position="1"/>
        <end position="198"/>
    </location>
</feature>
<feature type="active site" description="Proton acceptor" evidence="1">
    <location>
        <position position="72"/>
    </location>
</feature>
<feature type="site" description="Important for substrate specificity" evidence="1">
    <location>
        <position position="12"/>
    </location>
</feature>
<feature type="site" description="Important for substrate specificity" evidence="1">
    <location>
        <position position="73"/>
    </location>
</feature>
<feature type="site" description="Important for substrate specificity" evidence="1">
    <location>
        <position position="155"/>
    </location>
</feature>
<gene>
    <name type="ordered locus">Pfl01_0841</name>
</gene>
<reference key="1">
    <citation type="journal article" date="2009" name="Genome Biol.">
        <title>Genomic and genetic analyses of diversity and plant interactions of Pseudomonas fluorescens.</title>
        <authorList>
            <person name="Silby M.W."/>
            <person name="Cerdeno-Tarraga A.M."/>
            <person name="Vernikos G.S."/>
            <person name="Giddens S.R."/>
            <person name="Jackson R.W."/>
            <person name="Preston G.M."/>
            <person name="Zhang X.-X."/>
            <person name="Moon C.D."/>
            <person name="Gehrig S.M."/>
            <person name="Godfrey S.A.C."/>
            <person name="Knight C.G."/>
            <person name="Malone J.G."/>
            <person name="Robinson Z."/>
            <person name="Spiers A.J."/>
            <person name="Harris S."/>
            <person name="Challis G.L."/>
            <person name="Yaxley A.M."/>
            <person name="Harris D."/>
            <person name="Seeger K."/>
            <person name="Murphy L."/>
            <person name="Rutter S."/>
            <person name="Squares R."/>
            <person name="Quail M.A."/>
            <person name="Saunders E."/>
            <person name="Mavromatis K."/>
            <person name="Brettin T.S."/>
            <person name="Bentley S.D."/>
            <person name="Hothersall J."/>
            <person name="Stephens E."/>
            <person name="Thomas C.M."/>
            <person name="Parkhill J."/>
            <person name="Levy S.B."/>
            <person name="Rainey P.B."/>
            <person name="Thomson N.R."/>
        </authorList>
    </citation>
    <scope>NUCLEOTIDE SEQUENCE [LARGE SCALE GENOMIC DNA]</scope>
    <source>
        <strain>Pf0-1</strain>
    </source>
</reference>
<sequence length="198" mass="21092">MKKLYLASGSPRRRELLTQIGIPFTAISADIDETPLANESPLAYVERLARGKAEAGRRIVTSEPPFCVLGADTAVVLDGKILGKPVDEADACAMLMMLSGKEHEVLTAIAVLDGERCESRVVRSLVRFRSISREEAAAYWASGEPRDKAGGYGIQGLGAVFVAGLNGSYSAVVGLPVCESAELLGHFGIPCWQTLNAQ</sequence>
<evidence type="ECO:0000255" key="1">
    <source>
        <dbReference type="HAMAP-Rule" id="MF_00528"/>
    </source>
</evidence>